<protein>
    <recommendedName>
        <fullName evidence="1">Nucleotide-binding protein AFE_3021</fullName>
    </recommendedName>
</protein>
<feature type="chain" id="PRO_0000383204" description="Nucleotide-binding protein AFE_3021">
    <location>
        <begin position="1"/>
        <end position="299"/>
    </location>
</feature>
<feature type="binding site" evidence="1">
    <location>
        <begin position="11"/>
        <end position="18"/>
    </location>
    <ligand>
        <name>ATP</name>
        <dbReference type="ChEBI" id="CHEBI:30616"/>
    </ligand>
</feature>
<feature type="binding site" evidence="1">
    <location>
        <begin position="62"/>
        <end position="65"/>
    </location>
    <ligand>
        <name>GTP</name>
        <dbReference type="ChEBI" id="CHEBI:37565"/>
    </ligand>
</feature>
<keyword id="KW-0067">ATP-binding</keyword>
<keyword id="KW-0342">GTP-binding</keyword>
<keyword id="KW-0547">Nucleotide-binding</keyword>
<keyword id="KW-1185">Reference proteome</keyword>
<proteinExistence type="inferred from homology"/>
<accession>B7J9Z4</accession>
<evidence type="ECO:0000255" key="1">
    <source>
        <dbReference type="HAMAP-Rule" id="MF_00636"/>
    </source>
</evidence>
<dbReference type="EMBL" id="CP001219">
    <property type="protein sequence ID" value="ACK78119.1"/>
    <property type="molecule type" value="Genomic_DNA"/>
</dbReference>
<dbReference type="RefSeq" id="WP_012537550.1">
    <property type="nucleotide sequence ID" value="NC_011761.1"/>
</dbReference>
<dbReference type="SMR" id="B7J9Z4"/>
<dbReference type="STRING" id="243159.AFE_3021"/>
<dbReference type="PaxDb" id="243159-AFE_3021"/>
<dbReference type="GeneID" id="65282022"/>
<dbReference type="KEGG" id="afr:AFE_3021"/>
<dbReference type="eggNOG" id="COG1660">
    <property type="taxonomic scope" value="Bacteria"/>
</dbReference>
<dbReference type="HOGENOM" id="CLU_059558_1_1_6"/>
<dbReference type="Proteomes" id="UP000001362">
    <property type="component" value="Chromosome"/>
</dbReference>
<dbReference type="GO" id="GO:0005524">
    <property type="term" value="F:ATP binding"/>
    <property type="evidence" value="ECO:0007669"/>
    <property type="project" value="UniProtKB-UniRule"/>
</dbReference>
<dbReference type="GO" id="GO:0005525">
    <property type="term" value="F:GTP binding"/>
    <property type="evidence" value="ECO:0007669"/>
    <property type="project" value="UniProtKB-UniRule"/>
</dbReference>
<dbReference type="Gene3D" id="3.40.50.300">
    <property type="entry name" value="P-loop containing nucleotide triphosphate hydrolases"/>
    <property type="match status" value="1"/>
</dbReference>
<dbReference type="HAMAP" id="MF_00636">
    <property type="entry name" value="RapZ_like"/>
    <property type="match status" value="1"/>
</dbReference>
<dbReference type="InterPro" id="IPR027417">
    <property type="entry name" value="P-loop_NTPase"/>
</dbReference>
<dbReference type="InterPro" id="IPR005337">
    <property type="entry name" value="RapZ-like"/>
</dbReference>
<dbReference type="InterPro" id="IPR053930">
    <property type="entry name" value="RapZ-like_N"/>
</dbReference>
<dbReference type="InterPro" id="IPR053931">
    <property type="entry name" value="RapZ_C"/>
</dbReference>
<dbReference type="NCBIfam" id="NF003828">
    <property type="entry name" value="PRK05416.1"/>
    <property type="match status" value="1"/>
</dbReference>
<dbReference type="PANTHER" id="PTHR30448">
    <property type="entry name" value="RNASE ADAPTER PROTEIN RAPZ"/>
    <property type="match status" value="1"/>
</dbReference>
<dbReference type="PANTHER" id="PTHR30448:SF0">
    <property type="entry name" value="RNASE ADAPTER PROTEIN RAPZ"/>
    <property type="match status" value="1"/>
</dbReference>
<dbReference type="Pfam" id="PF22740">
    <property type="entry name" value="PapZ_C"/>
    <property type="match status" value="1"/>
</dbReference>
<dbReference type="Pfam" id="PF03668">
    <property type="entry name" value="RapZ-like_N"/>
    <property type="match status" value="1"/>
</dbReference>
<dbReference type="PIRSF" id="PIRSF005052">
    <property type="entry name" value="P-loopkin"/>
    <property type="match status" value="1"/>
</dbReference>
<dbReference type="SUPFAM" id="SSF52540">
    <property type="entry name" value="P-loop containing nucleoside triphosphate hydrolases"/>
    <property type="match status" value="1"/>
</dbReference>
<name>Y3021_ACIF2</name>
<organism>
    <name type="scientific">Acidithiobacillus ferrooxidans (strain ATCC 23270 / DSM 14882 / CIP 104768 / NCIMB 8455)</name>
    <name type="common">Ferrobacillus ferrooxidans (strain ATCC 23270)</name>
    <dbReference type="NCBI Taxonomy" id="243159"/>
    <lineage>
        <taxon>Bacteria</taxon>
        <taxon>Pseudomonadati</taxon>
        <taxon>Pseudomonadota</taxon>
        <taxon>Acidithiobacillia</taxon>
        <taxon>Acidithiobacillales</taxon>
        <taxon>Acidithiobacillaceae</taxon>
        <taxon>Acidithiobacillus</taxon>
    </lineage>
</organism>
<gene>
    <name type="ordered locus">AFE_3021</name>
</gene>
<comment type="function">
    <text evidence="1">Displays ATPase and GTPase activities.</text>
</comment>
<comment type="similarity">
    <text evidence="1">Belongs to the RapZ-like family.</text>
</comment>
<sequence length="299" mass="33557">MAERDFIIVSGLSGSGKSTVLQALEDQGYYCVDNLPATLLVDFGAQLARRDASSMLAAVSIDVRNREFLAALPQALADLRQRYALCPRILFLEADEGTLLRRFSETRRRHPLTDDLAAALGESLLTVLRREREMVQPLADVADKRLDTSQINTHQLRLRVQAWSLASRHYSGLVLLLQSFAFKKGLPLDSDFVFDLRALPNPHYDPELRALTGRDAPVRDFLEKSPEVARSFVSLRTFLQTWLAPFAQEHRNYVTVSLGCTGGQHRSVYMVEALARLLAGEGQRVLIQHRELGITETLT</sequence>
<reference key="1">
    <citation type="journal article" date="2008" name="BMC Genomics">
        <title>Acidithiobacillus ferrooxidans metabolism: from genome sequence to industrial applications.</title>
        <authorList>
            <person name="Valdes J."/>
            <person name="Pedroso I."/>
            <person name="Quatrini R."/>
            <person name="Dodson R.J."/>
            <person name="Tettelin H."/>
            <person name="Blake R. II"/>
            <person name="Eisen J.A."/>
            <person name="Holmes D.S."/>
        </authorList>
    </citation>
    <scope>NUCLEOTIDE SEQUENCE [LARGE SCALE GENOMIC DNA]</scope>
    <source>
        <strain>ATCC 23270 / DSM 14882 / CIP 104768 / NCIMB 8455</strain>
    </source>
</reference>